<protein>
    <recommendedName>
        <fullName evidence="1">Iron-sulfur cluster repair protein YtfE</fullName>
    </recommendedName>
</protein>
<accession>Q8FAH0</accession>
<organism>
    <name type="scientific">Escherichia coli O6:H1 (strain CFT073 / ATCC 700928 / UPEC)</name>
    <dbReference type="NCBI Taxonomy" id="199310"/>
    <lineage>
        <taxon>Bacteria</taxon>
        <taxon>Pseudomonadati</taxon>
        <taxon>Pseudomonadota</taxon>
        <taxon>Gammaproteobacteria</taxon>
        <taxon>Enterobacterales</taxon>
        <taxon>Enterobacteriaceae</taxon>
        <taxon>Escherichia</taxon>
    </lineage>
</organism>
<gene>
    <name evidence="1" type="primary">ytfE</name>
    <name type="ordered locus">c5308</name>
</gene>
<keyword id="KW-0963">Cytoplasm</keyword>
<keyword id="KW-0408">Iron</keyword>
<keyword id="KW-0479">Metal-binding</keyword>
<keyword id="KW-1185">Reference proteome</keyword>
<keyword id="KW-0346">Stress response</keyword>
<dbReference type="EMBL" id="AE014075">
    <property type="protein sequence ID" value="AAN83729.1"/>
    <property type="molecule type" value="Genomic_DNA"/>
</dbReference>
<dbReference type="RefSeq" id="WP_000331451.1">
    <property type="nucleotide sequence ID" value="NZ_CP051263.1"/>
</dbReference>
<dbReference type="SMR" id="Q8FAH0"/>
<dbReference type="STRING" id="199310.c5308"/>
<dbReference type="GeneID" id="89519204"/>
<dbReference type="KEGG" id="ecc:c5308"/>
<dbReference type="eggNOG" id="COG2846">
    <property type="taxonomic scope" value="Bacteria"/>
</dbReference>
<dbReference type="HOGENOM" id="CLU_076075_2_0_6"/>
<dbReference type="BioCyc" id="ECOL199310:C5308-MONOMER"/>
<dbReference type="Proteomes" id="UP000001410">
    <property type="component" value="Chromosome"/>
</dbReference>
<dbReference type="GO" id="GO:0005737">
    <property type="term" value="C:cytoplasm"/>
    <property type="evidence" value="ECO:0007669"/>
    <property type="project" value="UniProtKB-SubCell"/>
</dbReference>
<dbReference type="GO" id="GO:0046872">
    <property type="term" value="F:metal ion binding"/>
    <property type="evidence" value="ECO:0007669"/>
    <property type="project" value="UniProtKB-KW"/>
</dbReference>
<dbReference type="GO" id="GO:0030091">
    <property type="term" value="P:protein repair"/>
    <property type="evidence" value="ECO:0007669"/>
    <property type="project" value="UniProtKB-UniRule"/>
</dbReference>
<dbReference type="GO" id="GO:0051409">
    <property type="term" value="P:response to nitrosative stress"/>
    <property type="evidence" value="ECO:0007669"/>
    <property type="project" value="UniProtKB-UniRule"/>
</dbReference>
<dbReference type="GO" id="GO:0006979">
    <property type="term" value="P:response to oxidative stress"/>
    <property type="evidence" value="ECO:0007669"/>
    <property type="project" value="UniProtKB-UniRule"/>
</dbReference>
<dbReference type="CDD" id="cd12108">
    <property type="entry name" value="Hr-like"/>
    <property type="match status" value="1"/>
</dbReference>
<dbReference type="FunFam" id="1.20.120.520:FF:000001">
    <property type="entry name" value="Iron-sulfur cluster repair protein YtfE"/>
    <property type="match status" value="1"/>
</dbReference>
<dbReference type="Gene3D" id="1.20.120.520">
    <property type="entry name" value="nmb1532 protein domain like"/>
    <property type="match status" value="1"/>
</dbReference>
<dbReference type="HAMAP" id="MF_01606">
    <property type="entry name" value="RIC_YtfE"/>
    <property type="match status" value="1"/>
</dbReference>
<dbReference type="InterPro" id="IPR023742">
    <property type="entry name" value="FeS-repair_YftE"/>
</dbReference>
<dbReference type="InterPro" id="IPR012312">
    <property type="entry name" value="Hemerythrin-like"/>
</dbReference>
<dbReference type="InterPro" id="IPR019903">
    <property type="entry name" value="RIC_family"/>
</dbReference>
<dbReference type="NCBIfam" id="TIGR03652">
    <property type="entry name" value="FeS_repair_RIC"/>
    <property type="match status" value="1"/>
</dbReference>
<dbReference type="NCBIfam" id="NF008221">
    <property type="entry name" value="PRK10992.1"/>
    <property type="match status" value="1"/>
</dbReference>
<dbReference type="PANTHER" id="PTHR36438">
    <property type="entry name" value="IRON-SULFUR CLUSTER REPAIR PROTEIN YTFE"/>
    <property type="match status" value="1"/>
</dbReference>
<dbReference type="PANTHER" id="PTHR36438:SF1">
    <property type="entry name" value="IRON-SULFUR CLUSTER REPAIR PROTEIN YTFE"/>
    <property type="match status" value="1"/>
</dbReference>
<dbReference type="Pfam" id="PF01814">
    <property type="entry name" value="Hemerythrin"/>
    <property type="match status" value="1"/>
</dbReference>
<dbReference type="Pfam" id="PF04405">
    <property type="entry name" value="ScdA_N"/>
    <property type="match status" value="1"/>
</dbReference>
<sequence length="220" mass="24883">MAYRDQPLGELALSIPRASALFRKYDMDYCCGGKQTLARAAARKELDVDVIEAELAKLAEQPIEKDWRSAPLAEIIDHIIVRYHDRHREQLPELILQATKVERVHADKPSVPKGLTKYLTMLHEELSSHMMKEEQILFPMIKQGMGSQAMGPISVMESEHDEAGELLEVIKHTTNNVTPPPEACTTWKAMYNGINELIDDLMEHISLENNVLFPRALAGE</sequence>
<evidence type="ECO:0000255" key="1">
    <source>
        <dbReference type="HAMAP-Rule" id="MF_01606"/>
    </source>
</evidence>
<feature type="chain" id="PRO_0000213050" description="Iron-sulfur cluster repair protein YtfE">
    <location>
        <begin position="1"/>
        <end position="220"/>
    </location>
</feature>
<proteinExistence type="inferred from homology"/>
<reference key="1">
    <citation type="journal article" date="2002" name="Proc. Natl. Acad. Sci. U.S.A.">
        <title>Extensive mosaic structure revealed by the complete genome sequence of uropathogenic Escherichia coli.</title>
        <authorList>
            <person name="Welch R.A."/>
            <person name="Burland V."/>
            <person name="Plunkett G. III"/>
            <person name="Redford P."/>
            <person name="Roesch P."/>
            <person name="Rasko D."/>
            <person name="Buckles E.L."/>
            <person name="Liou S.-R."/>
            <person name="Boutin A."/>
            <person name="Hackett J."/>
            <person name="Stroud D."/>
            <person name="Mayhew G.F."/>
            <person name="Rose D.J."/>
            <person name="Zhou S."/>
            <person name="Schwartz D.C."/>
            <person name="Perna N.T."/>
            <person name="Mobley H.L.T."/>
            <person name="Donnenberg M.S."/>
            <person name="Blattner F.R."/>
        </authorList>
    </citation>
    <scope>NUCLEOTIDE SEQUENCE [LARGE SCALE GENOMIC DNA]</scope>
    <source>
        <strain>CFT073 / ATCC 700928 / UPEC</strain>
    </source>
</reference>
<name>YTFE_ECOL6</name>
<comment type="function">
    <text evidence="1">Di-iron-containing protein involved in the repair of iron-sulfur clusters damaged by oxidative and nitrosative stress conditions.</text>
</comment>
<comment type="subunit">
    <text evidence="1">Homodimer.</text>
</comment>
<comment type="subcellular location">
    <subcellularLocation>
        <location evidence="1">Cytoplasm</location>
    </subcellularLocation>
</comment>
<comment type="similarity">
    <text evidence="1">Belongs to the RIC family. YtfE subfamily.</text>
</comment>